<feature type="chain" id="PRO_1000165121" description="Multifunctional CCA protein">
    <location>
        <begin position="1"/>
        <end position="412"/>
    </location>
</feature>
<feature type="domain" description="HD" evidence="1">
    <location>
        <begin position="228"/>
        <end position="329"/>
    </location>
</feature>
<feature type="binding site" evidence="1">
    <location>
        <position position="8"/>
    </location>
    <ligand>
        <name>ATP</name>
        <dbReference type="ChEBI" id="CHEBI:30616"/>
    </ligand>
</feature>
<feature type="binding site" evidence="1">
    <location>
        <position position="8"/>
    </location>
    <ligand>
        <name>CTP</name>
        <dbReference type="ChEBI" id="CHEBI:37563"/>
    </ligand>
</feature>
<feature type="binding site" evidence="1">
    <location>
        <position position="11"/>
    </location>
    <ligand>
        <name>ATP</name>
        <dbReference type="ChEBI" id="CHEBI:30616"/>
    </ligand>
</feature>
<feature type="binding site" evidence="1">
    <location>
        <position position="11"/>
    </location>
    <ligand>
        <name>CTP</name>
        <dbReference type="ChEBI" id="CHEBI:37563"/>
    </ligand>
</feature>
<feature type="binding site" evidence="1">
    <location>
        <position position="21"/>
    </location>
    <ligand>
        <name>Mg(2+)</name>
        <dbReference type="ChEBI" id="CHEBI:18420"/>
    </ligand>
</feature>
<feature type="binding site" evidence="1">
    <location>
        <position position="23"/>
    </location>
    <ligand>
        <name>Mg(2+)</name>
        <dbReference type="ChEBI" id="CHEBI:18420"/>
    </ligand>
</feature>
<feature type="binding site" evidence="1">
    <location>
        <position position="91"/>
    </location>
    <ligand>
        <name>ATP</name>
        <dbReference type="ChEBI" id="CHEBI:30616"/>
    </ligand>
</feature>
<feature type="binding site" evidence="1">
    <location>
        <position position="91"/>
    </location>
    <ligand>
        <name>CTP</name>
        <dbReference type="ChEBI" id="CHEBI:37563"/>
    </ligand>
</feature>
<feature type="binding site" evidence="1">
    <location>
        <position position="137"/>
    </location>
    <ligand>
        <name>ATP</name>
        <dbReference type="ChEBI" id="CHEBI:30616"/>
    </ligand>
</feature>
<feature type="binding site" evidence="1">
    <location>
        <position position="137"/>
    </location>
    <ligand>
        <name>CTP</name>
        <dbReference type="ChEBI" id="CHEBI:37563"/>
    </ligand>
</feature>
<feature type="binding site" evidence="1">
    <location>
        <position position="140"/>
    </location>
    <ligand>
        <name>ATP</name>
        <dbReference type="ChEBI" id="CHEBI:30616"/>
    </ligand>
</feature>
<feature type="binding site" evidence="1">
    <location>
        <position position="140"/>
    </location>
    <ligand>
        <name>CTP</name>
        <dbReference type="ChEBI" id="CHEBI:37563"/>
    </ligand>
</feature>
<reference key="1">
    <citation type="journal article" date="2009" name="PLoS Genet.">
        <title>Organised genome dynamics in the Escherichia coli species results in highly diverse adaptive paths.</title>
        <authorList>
            <person name="Touchon M."/>
            <person name="Hoede C."/>
            <person name="Tenaillon O."/>
            <person name="Barbe V."/>
            <person name="Baeriswyl S."/>
            <person name="Bidet P."/>
            <person name="Bingen E."/>
            <person name="Bonacorsi S."/>
            <person name="Bouchier C."/>
            <person name="Bouvet O."/>
            <person name="Calteau A."/>
            <person name="Chiapello H."/>
            <person name="Clermont O."/>
            <person name="Cruveiller S."/>
            <person name="Danchin A."/>
            <person name="Diard M."/>
            <person name="Dossat C."/>
            <person name="Karoui M.E."/>
            <person name="Frapy E."/>
            <person name="Garry L."/>
            <person name="Ghigo J.M."/>
            <person name="Gilles A.M."/>
            <person name="Johnson J."/>
            <person name="Le Bouguenec C."/>
            <person name="Lescat M."/>
            <person name="Mangenot S."/>
            <person name="Martinez-Jehanne V."/>
            <person name="Matic I."/>
            <person name="Nassif X."/>
            <person name="Oztas S."/>
            <person name="Petit M.A."/>
            <person name="Pichon C."/>
            <person name="Rouy Z."/>
            <person name="Ruf C.S."/>
            <person name="Schneider D."/>
            <person name="Tourret J."/>
            <person name="Vacherie B."/>
            <person name="Vallenet D."/>
            <person name="Medigue C."/>
            <person name="Rocha E.P.C."/>
            <person name="Denamur E."/>
        </authorList>
    </citation>
    <scope>NUCLEOTIDE SEQUENCE [LARGE SCALE GENOMIC DNA]</scope>
    <source>
        <strain>ED1a</strain>
    </source>
</reference>
<comment type="function">
    <text evidence="1">Catalyzes the addition and repair of the essential 3'-terminal CCA sequence in tRNAs without using a nucleic acid template. Adds these three nucleotides in the order of C, C, and A to the tRNA nucleotide-73, using CTP and ATP as substrates and producing inorganic pyrophosphate. tRNA 3'-terminal CCA addition is required both for tRNA processing and repair. Also involved in tRNA surveillance by mediating tandem CCA addition to generate a CCACCA at the 3' terminus of unstable tRNAs. While stable tRNAs receive only 3'-terminal CCA, unstable tRNAs are marked with CCACCA and rapidly degraded.</text>
</comment>
<comment type="catalytic activity">
    <reaction evidence="1">
        <text>a tRNA precursor + 2 CTP + ATP = a tRNA with a 3' CCA end + 3 diphosphate</text>
        <dbReference type="Rhea" id="RHEA:14433"/>
        <dbReference type="Rhea" id="RHEA-COMP:10465"/>
        <dbReference type="Rhea" id="RHEA-COMP:10468"/>
        <dbReference type="ChEBI" id="CHEBI:30616"/>
        <dbReference type="ChEBI" id="CHEBI:33019"/>
        <dbReference type="ChEBI" id="CHEBI:37563"/>
        <dbReference type="ChEBI" id="CHEBI:74896"/>
        <dbReference type="ChEBI" id="CHEBI:83071"/>
        <dbReference type="EC" id="2.7.7.72"/>
    </reaction>
</comment>
<comment type="catalytic activity">
    <reaction evidence="1">
        <text>a tRNA with a 3' CCA end + 2 CTP + ATP = a tRNA with a 3' CCACCA end + 3 diphosphate</text>
        <dbReference type="Rhea" id="RHEA:76235"/>
        <dbReference type="Rhea" id="RHEA-COMP:10468"/>
        <dbReference type="Rhea" id="RHEA-COMP:18655"/>
        <dbReference type="ChEBI" id="CHEBI:30616"/>
        <dbReference type="ChEBI" id="CHEBI:33019"/>
        <dbReference type="ChEBI" id="CHEBI:37563"/>
        <dbReference type="ChEBI" id="CHEBI:83071"/>
        <dbReference type="ChEBI" id="CHEBI:195187"/>
    </reaction>
    <physiologicalReaction direction="left-to-right" evidence="1">
        <dbReference type="Rhea" id="RHEA:76236"/>
    </physiologicalReaction>
</comment>
<comment type="cofactor">
    <cofactor evidence="1">
        <name>Mg(2+)</name>
        <dbReference type="ChEBI" id="CHEBI:18420"/>
    </cofactor>
    <text evidence="1">Magnesium is required for nucleotidyltransferase activity.</text>
</comment>
<comment type="cofactor">
    <cofactor evidence="1">
        <name>Ni(2+)</name>
        <dbReference type="ChEBI" id="CHEBI:49786"/>
    </cofactor>
    <text evidence="1">Nickel for phosphatase activity.</text>
</comment>
<comment type="subunit">
    <text evidence="1">Monomer. Can also form homodimers and oligomers.</text>
</comment>
<comment type="domain">
    <text evidence="1">Comprises two domains: an N-terminal domain containing the nucleotidyltransferase activity and a C-terminal HD domain associated with both phosphodiesterase and phosphatase activities.</text>
</comment>
<comment type="miscellaneous">
    <text evidence="1">A single active site specifically recognizes both ATP and CTP and is responsible for their addition.</text>
</comment>
<comment type="similarity">
    <text evidence="1">Belongs to the tRNA nucleotidyltransferase/poly(A) polymerase family. Bacterial CCA-adding enzyme type 1 subfamily.</text>
</comment>
<keyword id="KW-0067">ATP-binding</keyword>
<keyword id="KW-0378">Hydrolase</keyword>
<keyword id="KW-0460">Magnesium</keyword>
<keyword id="KW-0479">Metal-binding</keyword>
<keyword id="KW-0511">Multifunctional enzyme</keyword>
<keyword id="KW-0533">Nickel</keyword>
<keyword id="KW-0547">Nucleotide-binding</keyword>
<keyword id="KW-0548">Nucleotidyltransferase</keyword>
<keyword id="KW-0692">RNA repair</keyword>
<keyword id="KW-0694">RNA-binding</keyword>
<keyword id="KW-0808">Transferase</keyword>
<keyword id="KW-0819">tRNA processing</keyword>
<sequence length="412" mass="46569">MKIYLVGGAVRDALLGLPVKDRDWVVVGSTPQEMLDAGYQQVGRDFPVFLHPQTHEEYALARTERKSGSGYTGFTCYAAPDVTLEDDLKRRDLTINALAQDDNGEIIDPYNGLGDLQNRLLRHVSPAFGEDPLRVLRVARFAARYAHLSFRIADETLALMREMTHAGELEHLTPERVWKETENALTTRNPQVFFQVLRDCGALRVLFPEIDALFGVPAPARWHPEIDTGIHTLMTLSMAAMLSPQVDVRFATLCHDLGKGLTPPELWPRHHGHGPAGVKLVEQLCQRLRVPNEIRDLARLVAEFHDLIHTFPMLNPKTIVKLFDSIDAWRKPQRVEQLALTSEADVRGRTGFESADYPQGRWLREAWEVAQSVPTKAVVEAGFKGVEIREELTRRRIAAVANWKEQRCPKSE</sequence>
<protein>
    <recommendedName>
        <fullName evidence="1">Multifunctional CCA protein</fullName>
    </recommendedName>
    <domain>
        <recommendedName>
            <fullName evidence="1">CCA-adding enzyme</fullName>
            <ecNumber evidence="1">2.7.7.72</ecNumber>
        </recommendedName>
        <alternativeName>
            <fullName evidence="1">CCA tRNA nucleotidyltransferase</fullName>
        </alternativeName>
        <alternativeName>
            <fullName evidence="1">tRNA CCA-pyrophosphorylase</fullName>
        </alternativeName>
        <alternativeName>
            <fullName evidence="1">tRNA adenylyl-/cytidylyl-transferase</fullName>
        </alternativeName>
        <alternativeName>
            <fullName evidence="1">tRNA nucleotidyltransferase</fullName>
        </alternativeName>
        <alternativeName>
            <fullName evidence="1">tRNA-NT</fullName>
        </alternativeName>
    </domain>
    <domain>
        <recommendedName>
            <fullName evidence="1">2'-nucleotidase</fullName>
            <ecNumber evidence="1">3.1.3.-</ecNumber>
        </recommendedName>
    </domain>
    <domain>
        <recommendedName>
            <fullName evidence="1">2',3'-cyclic phosphodiesterase</fullName>
            <ecNumber evidence="1">3.1.4.-</ecNumber>
        </recommendedName>
    </domain>
    <domain>
        <recommendedName>
            <fullName evidence="1">Phosphatase</fullName>
            <ecNumber evidence="1">3.1.3.-</ecNumber>
        </recommendedName>
    </domain>
</protein>
<accession>B7N0K6</accession>
<evidence type="ECO:0000255" key="1">
    <source>
        <dbReference type="HAMAP-Rule" id="MF_01261"/>
    </source>
</evidence>
<gene>
    <name evidence="1" type="primary">cca</name>
    <name type="ordered locus">ECED1_3725</name>
</gene>
<organism>
    <name type="scientific">Escherichia coli O81 (strain ED1a)</name>
    <dbReference type="NCBI Taxonomy" id="585397"/>
    <lineage>
        <taxon>Bacteria</taxon>
        <taxon>Pseudomonadati</taxon>
        <taxon>Pseudomonadota</taxon>
        <taxon>Gammaproteobacteria</taxon>
        <taxon>Enterobacterales</taxon>
        <taxon>Enterobacteriaceae</taxon>
        <taxon>Escherichia</taxon>
    </lineage>
</organism>
<proteinExistence type="inferred from homology"/>
<name>CCA_ECO81</name>
<dbReference type="EC" id="2.7.7.72" evidence="1"/>
<dbReference type="EC" id="3.1.3.-" evidence="1"/>
<dbReference type="EC" id="3.1.4.-" evidence="1"/>
<dbReference type="EMBL" id="CU928162">
    <property type="protein sequence ID" value="CAR09874.2"/>
    <property type="molecule type" value="Genomic_DNA"/>
</dbReference>
<dbReference type="RefSeq" id="WP_000708509.1">
    <property type="nucleotide sequence ID" value="NC_011745.1"/>
</dbReference>
<dbReference type="SMR" id="B7N0K6"/>
<dbReference type="KEGG" id="ecq:ECED1_3725"/>
<dbReference type="HOGENOM" id="CLU_015961_1_1_6"/>
<dbReference type="Proteomes" id="UP000000748">
    <property type="component" value="Chromosome"/>
</dbReference>
<dbReference type="GO" id="GO:0005524">
    <property type="term" value="F:ATP binding"/>
    <property type="evidence" value="ECO:0007669"/>
    <property type="project" value="UniProtKB-UniRule"/>
</dbReference>
<dbReference type="GO" id="GO:0004810">
    <property type="term" value="F:CCA tRNA nucleotidyltransferase activity"/>
    <property type="evidence" value="ECO:0007669"/>
    <property type="project" value="UniProtKB-UniRule"/>
</dbReference>
<dbReference type="GO" id="GO:0004112">
    <property type="term" value="F:cyclic-nucleotide phosphodiesterase activity"/>
    <property type="evidence" value="ECO:0007669"/>
    <property type="project" value="UniProtKB-UniRule"/>
</dbReference>
<dbReference type="GO" id="GO:0000287">
    <property type="term" value="F:magnesium ion binding"/>
    <property type="evidence" value="ECO:0007669"/>
    <property type="project" value="UniProtKB-UniRule"/>
</dbReference>
<dbReference type="GO" id="GO:0016791">
    <property type="term" value="F:phosphatase activity"/>
    <property type="evidence" value="ECO:0007669"/>
    <property type="project" value="UniProtKB-UniRule"/>
</dbReference>
<dbReference type="GO" id="GO:0000049">
    <property type="term" value="F:tRNA binding"/>
    <property type="evidence" value="ECO:0007669"/>
    <property type="project" value="UniProtKB-UniRule"/>
</dbReference>
<dbReference type="GO" id="GO:0042245">
    <property type="term" value="P:RNA repair"/>
    <property type="evidence" value="ECO:0007669"/>
    <property type="project" value="UniProtKB-KW"/>
</dbReference>
<dbReference type="GO" id="GO:0001680">
    <property type="term" value="P:tRNA 3'-terminal CCA addition"/>
    <property type="evidence" value="ECO:0007669"/>
    <property type="project" value="UniProtKB-UniRule"/>
</dbReference>
<dbReference type="CDD" id="cd00077">
    <property type="entry name" value="HDc"/>
    <property type="match status" value="1"/>
</dbReference>
<dbReference type="CDD" id="cd05398">
    <property type="entry name" value="NT_ClassII-CCAase"/>
    <property type="match status" value="1"/>
</dbReference>
<dbReference type="FunFam" id="1.10.3090.10:FF:000001">
    <property type="entry name" value="Multifunctional CCA protein"/>
    <property type="match status" value="1"/>
</dbReference>
<dbReference type="FunFam" id="3.30.460.10:FF:000016">
    <property type="entry name" value="Multifunctional CCA protein"/>
    <property type="match status" value="1"/>
</dbReference>
<dbReference type="Gene3D" id="3.30.460.10">
    <property type="entry name" value="Beta Polymerase, domain 2"/>
    <property type="match status" value="1"/>
</dbReference>
<dbReference type="Gene3D" id="1.10.3090.10">
    <property type="entry name" value="cca-adding enzyme, domain 2"/>
    <property type="match status" value="1"/>
</dbReference>
<dbReference type="HAMAP" id="MF_01261">
    <property type="entry name" value="CCA_bact_type1"/>
    <property type="match status" value="1"/>
</dbReference>
<dbReference type="HAMAP" id="MF_01262">
    <property type="entry name" value="CCA_bact_type2"/>
    <property type="match status" value="1"/>
</dbReference>
<dbReference type="InterPro" id="IPR012006">
    <property type="entry name" value="CCA_bact"/>
</dbReference>
<dbReference type="InterPro" id="IPR003607">
    <property type="entry name" value="HD/PDEase_dom"/>
</dbReference>
<dbReference type="InterPro" id="IPR006674">
    <property type="entry name" value="HD_domain"/>
</dbReference>
<dbReference type="InterPro" id="IPR043519">
    <property type="entry name" value="NT_sf"/>
</dbReference>
<dbReference type="InterPro" id="IPR002646">
    <property type="entry name" value="PolA_pol_head_dom"/>
</dbReference>
<dbReference type="InterPro" id="IPR032828">
    <property type="entry name" value="PolyA_RNA-bd"/>
</dbReference>
<dbReference type="InterPro" id="IPR050124">
    <property type="entry name" value="tRNA_CCA-adding_enzyme"/>
</dbReference>
<dbReference type="NCBIfam" id="NF008137">
    <property type="entry name" value="PRK10885.1"/>
    <property type="match status" value="1"/>
</dbReference>
<dbReference type="PANTHER" id="PTHR47545">
    <property type="entry name" value="MULTIFUNCTIONAL CCA PROTEIN"/>
    <property type="match status" value="1"/>
</dbReference>
<dbReference type="PANTHER" id="PTHR47545:SF1">
    <property type="entry name" value="MULTIFUNCTIONAL CCA PROTEIN"/>
    <property type="match status" value="1"/>
</dbReference>
<dbReference type="Pfam" id="PF01966">
    <property type="entry name" value="HD"/>
    <property type="match status" value="1"/>
</dbReference>
<dbReference type="Pfam" id="PF01743">
    <property type="entry name" value="PolyA_pol"/>
    <property type="match status" value="1"/>
</dbReference>
<dbReference type="Pfam" id="PF12627">
    <property type="entry name" value="PolyA_pol_RNAbd"/>
    <property type="match status" value="1"/>
</dbReference>
<dbReference type="PIRSF" id="PIRSF000813">
    <property type="entry name" value="CCA_bact"/>
    <property type="match status" value="1"/>
</dbReference>
<dbReference type="SUPFAM" id="SSF81301">
    <property type="entry name" value="Nucleotidyltransferase"/>
    <property type="match status" value="1"/>
</dbReference>
<dbReference type="SUPFAM" id="SSF81891">
    <property type="entry name" value="Poly A polymerase C-terminal region-like"/>
    <property type="match status" value="1"/>
</dbReference>
<dbReference type="PROSITE" id="PS51831">
    <property type="entry name" value="HD"/>
    <property type="match status" value="1"/>
</dbReference>